<evidence type="ECO:0000250" key="1"/>
<evidence type="ECO:0000255" key="2"/>
<evidence type="ECO:0000305" key="3"/>
<comment type="function">
    <text>Component of the asymmetric unit membrane (AUM); a highly specialized biomembrane elaborated by terminally differentiated urothelial cells.</text>
</comment>
<comment type="subunit">
    <text evidence="1">Heterodimer with uroplakin-3A (UPK3A) or uroplakin-3B (UPK3B).</text>
</comment>
<comment type="subcellular location">
    <subcellularLocation>
        <location>Membrane</location>
        <topology>Multi-pass membrane protein</topology>
    </subcellularLocation>
</comment>
<comment type="induction">
    <text>Down-regulated by TGF-beta and serum in quiescent cells. Rapidly and transiently induced by TGF-beta in actively growing cells.</text>
</comment>
<comment type="similarity">
    <text evidence="3">Belongs to the tetraspanin (TM4SF) family.</text>
</comment>
<gene>
    <name type="primary">UPK1B</name>
</gene>
<reference key="1">
    <citation type="journal article" date="1991" name="Mol. Cell. Biol.">
        <title>Cloning of a growth arrest-specific and transforming growth factor beta-regulated gene, TI 1, from an epithelial cell line.</title>
        <authorList>
            <person name="Kallin B."/>
            <person name="de Martin R."/>
            <person name="Etzold T."/>
            <person name="Sorrentino V."/>
            <person name="Philipson L."/>
        </authorList>
    </citation>
    <scope>NUCLEOTIDE SEQUENCE [MRNA]</scope>
    <source>
        <tissue>Lung epithelium</tissue>
    </source>
</reference>
<protein>
    <recommendedName>
        <fullName>Uroplakin-1b</fullName>
        <shortName>UP1b</shortName>
    </recommendedName>
    <alternativeName>
        <fullName>Protein TI 1</fullName>
    </alternativeName>
    <alternativeName>
        <fullName>Uroplakin Ib</fullName>
        <shortName>UPIb</shortName>
    </alternativeName>
</protein>
<dbReference type="EMBL" id="M64428">
    <property type="status" value="NOT_ANNOTATED_CDS"/>
    <property type="molecule type" value="mRNA"/>
</dbReference>
<dbReference type="PIR" id="A41531">
    <property type="entry name" value="A41531"/>
</dbReference>
<dbReference type="RefSeq" id="XP_044107374.1">
    <property type="nucleotide sequence ID" value="XM_044251439.1"/>
</dbReference>
<dbReference type="SMR" id="P30413"/>
<dbReference type="Ensembl" id="ENSNVIT00000016835.1">
    <property type="protein sequence ID" value="ENSNVIP00000014418.1"/>
    <property type="gene ID" value="ENSNVIG00000011317.1"/>
</dbReference>
<dbReference type="GeneID" id="122908527"/>
<dbReference type="GeneTree" id="ENSGT00940000160779"/>
<dbReference type="Proteomes" id="UP000694425">
    <property type="component" value="Unplaced"/>
</dbReference>
<dbReference type="GO" id="GO:0120001">
    <property type="term" value="C:apical plasma membrane urothelial plaque"/>
    <property type="evidence" value="ECO:0007669"/>
    <property type="project" value="Ensembl"/>
</dbReference>
<dbReference type="GO" id="GO:0030855">
    <property type="term" value="P:epithelial cell differentiation"/>
    <property type="evidence" value="ECO:0007669"/>
    <property type="project" value="Ensembl"/>
</dbReference>
<dbReference type="GO" id="GO:0009617">
    <property type="term" value="P:response to bacterium"/>
    <property type="evidence" value="ECO:0007669"/>
    <property type="project" value="Ensembl"/>
</dbReference>
<dbReference type="CDD" id="cd03156">
    <property type="entry name" value="uroplakin_I_like_LEL"/>
    <property type="match status" value="1"/>
</dbReference>
<dbReference type="FunFam" id="1.10.1450.10:FF:000014">
    <property type="entry name" value="Tetraspanin"/>
    <property type="match status" value="1"/>
</dbReference>
<dbReference type="Gene3D" id="1.10.1450.10">
    <property type="entry name" value="Tetraspanin"/>
    <property type="match status" value="1"/>
</dbReference>
<dbReference type="InterPro" id="IPR018499">
    <property type="entry name" value="Tetraspanin/Peripherin"/>
</dbReference>
<dbReference type="InterPro" id="IPR008952">
    <property type="entry name" value="Tetraspanin_EC2_sf"/>
</dbReference>
<dbReference type="PANTHER" id="PTHR47110">
    <property type="entry name" value="TESTIS-SPECIFIC EXPRESSED PROTEIN 55"/>
    <property type="match status" value="1"/>
</dbReference>
<dbReference type="PANTHER" id="PTHR47110:SF2">
    <property type="entry name" value="UROPLAKIN-1B"/>
    <property type="match status" value="1"/>
</dbReference>
<dbReference type="Pfam" id="PF00335">
    <property type="entry name" value="Tetraspanin"/>
    <property type="match status" value="1"/>
</dbReference>
<dbReference type="PRINTS" id="PR00259">
    <property type="entry name" value="TMFOUR"/>
</dbReference>
<dbReference type="SUPFAM" id="SSF48652">
    <property type="entry name" value="Tetraspanin"/>
    <property type="match status" value="1"/>
</dbReference>
<sequence>MAKDDSSVRCFQGLLIFGNVIVGMCGIALTAECIFFVSDQHSLYPLLEATDNDDIYGAAWIGMFVGICLFCLSVLGIVGIMKSNRKILLAYFILMFIVYGFEVASCITAATQRDFFTPNLFLKQMLERYQNNSPPNNDDQWKNNGVTKTWDRLMLQDHCCGVNGPSDWQRYTSAFRTANNDADYPWPRQCCVMNSLKEPLNVEACKLGVPGYYHKEGCYELISGPMNRHAWGVAWFGFAILCWTFWVLLGTMFYWSRIEY</sequence>
<keyword id="KW-0472">Membrane</keyword>
<keyword id="KW-1185">Reference proteome</keyword>
<keyword id="KW-0812">Transmembrane</keyword>
<keyword id="KW-1133">Transmembrane helix</keyword>
<organism>
    <name type="scientific">Neovison vison</name>
    <name type="common">American mink</name>
    <name type="synonym">Mustela vison</name>
    <dbReference type="NCBI Taxonomy" id="452646"/>
    <lineage>
        <taxon>Eukaryota</taxon>
        <taxon>Metazoa</taxon>
        <taxon>Chordata</taxon>
        <taxon>Craniata</taxon>
        <taxon>Vertebrata</taxon>
        <taxon>Euteleostomi</taxon>
        <taxon>Mammalia</taxon>
        <taxon>Eutheria</taxon>
        <taxon>Laurasiatheria</taxon>
        <taxon>Carnivora</taxon>
        <taxon>Caniformia</taxon>
        <taxon>Musteloidea</taxon>
        <taxon>Mustelidae</taxon>
        <taxon>Mustelinae</taxon>
        <taxon>Neogale</taxon>
    </lineage>
</organism>
<accession>P30413</accession>
<name>UPK1B_NEOVI</name>
<feature type="chain" id="PRO_0000219291" description="Uroplakin-1b">
    <location>
        <begin position="1"/>
        <end position="260"/>
    </location>
</feature>
<feature type="topological domain" description="Cytoplasmic" evidence="2">
    <location>
        <begin position="1"/>
        <end position="12"/>
    </location>
</feature>
<feature type="transmembrane region" description="Helical" evidence="2">
    <location>
        <begin position="13"/>
        <end position="38"/>
    </location>
</feature>
<feature type="topological domain" description="Extracellular" evidence="2">
    <location>
        <begin position="39"/>
        <end position="60"/>
    </location>
</feature>
<feature type="transmembrane region" description="Helical" evidence="2">
    <location>
        <begin position="61"/>
        <end position="81"/>
    </location>
</feature>
<feature type="topological domain" description="Cytoplasmic" evidence="2">
    <location>
        <begin position="82"/>
        <end position="86"/>
    </location>
</feature>
<feature type="transmembrane region" description="Helical" evidence="2">
    <location>
        <begin position="87"/>
        <end position="107"/>
    </location>
</feature>
<feature type="topological domain" description="Extracellular" evidence="2">
    <location>
        <begin position="108"/>
        <end position="229"/>
    </location>
</feature>
<feature type="transmembrane region" description="Helical" evidence="2">
    <location>
        <begin position="230"/>
        <end position="250"/>
    </location>
</feature>
<feature type="topological domain" description="Cytoplasmic" evidence="2">
    <location>
        <begin position="251"/>
        <end position="260"/>
    </location>
</feature>
<proteinExistence type="evidence at transcript level"/>